<accession>C0Q2N3</accession>
<gene>
    <name evidence="1" type="primary">atpG</name>
    <name type="ordered locus">SPC_3951</name>
</gene>
<protein>
    <recommendedName>
        <fullName evidence="1">ATP synthase gamma chain</fullName>
    </recommendedName>
    <alternativeName>
        <fullName evidence="1">ATP synthase F1 sector gamma subunit</fullName>
    </alternativeName>
    <alternativeName>
        <fullName evidence="1">F-ATPase gamma subunit</fullName>
    </alternativeName>
</protein>
<reference key="1">
    <citation type="journal article" date="2009" name="PLoS ONE">
        <title>Salmonella paratyphi C: genetic divergence from Salmonella choleraesuis and pathogenic convergence with Salmonella typhi.</title>
        <authorList>
            <person name="Liu W.-Q."/>
            <person name="Feng Y."/>
            <person name="Wang Y."/>
            <person name="Zou Q.-H."/>
            <person name="Chen F."/>
            <person name="Guo J.-T."/>
            <person name="Peng Y.-H."/>
            <person name="Jin Y."/>
            <person name="Li Y.-G."/>
            <person name="Hu S.-N."/>
            <person name="Johnston R.N."/>
            <person name="Liu G.-R."/>
            <person name="Liu S.-L."/>
        </authorList>
    </citation>
    <scope>NUCLEOTIDE SEQUENCE [LARGE SCALE GENOMIC DNA]</scope>
    <source>
        <strain>RKS4594</strain>
    </source>
</reference>
<sequence length="287" mass="31555">MAGAKEIRSKIASVQNTQKITKAMEMVAASKMRKSQDRMAASRPYAETMRKVIGHLANGNLEYKHPYLEERDVKRVGYLVVSTDRGLCGGLNINLFKKLLADMKAWSDKGVQCELAMIGSKGVSFFNSVGGNVVAQVTGMGDNPSLSELIGPVKVMLQAYDEGRLDKLYIVSNKFINTMSQVPTITQLLPLPASEDDDLKRKAWDYLYEPDPKALLDTLLRRYVESQVYQGVVENLASEQAARMVAMKAATDNGGSLIKELQLVYNKARQASITQELTEIVSGAAAV</sequence>
<comment type="function">
    <text evidence="1">Produces ATP from ADP in the presence of a proton gradient across the membrane. The gamma chain is believed to be important in regulating ATPase activity and the flow of protons through the CF(0) complex.</text>
</comment>
<comment type="subunit">
    <text evidence="1">F-type ATPases have 2 components, CF(1) - the catalytic core - and CF(0) - the membrane proton channel. CF(1) has five subunits: alpha(3), beta(3), gamma(1), delta(1), epsilon(1). CF(0) has three main subunits: a, b and c.</text>
</comment>
<comment type="subcellular location">
    <subcellularLocation>
        <location evidence="1">Cell inner membrane</location>
        <topology evidence="1">Peripheral membrane protein</topology>
    </subcellularLocation>
</comment>
<comment type="similarity">
    <text evidence="1">Belongs to the ATPase gamma chain family.</text>
</comment>
<feature type="chain" id="PRO_1000148635" description="ATP synthase gamma chain">
    <location>
        <begin position="1"/>
        <end position="287"/>
    </location>
</feature>
<dbReference type="EMBL" id="CP000857">
    <property type="protein sequence ID" value="ACN48019.1"/>
    <property type="molecule type" value="Genomic_DNA"/>
</dbReference>
<dbReference type="RefSeq" id="WP_000896506.1">
    <property type="nucleotide sequence ID" value="NC_012125.1"/>
</dbReference>
<dbReference type="SMR" id="C0Q2N3"/>
<dbReference type="GeneID" id="66758155"/>
<dbReference type="KEGG" id="sei:SPC_3951"/>
<dbReference type="HOGENOM" id="CLU_050669_0_1_6"/>
<dbReference type="Proteomes" id="UP000001599">
    <property type="component" value="Chromosome"/>
</dbReference>
<dbReference type="GO" id="GO:0005886">
    <property type="term" value="C:plasma membrane"/>
    <property type="evidence" value="ECO:0007669"/>
    <property type="project" value="UniProtKB-SubCell"/>
</dbReference>
<dbReference type="GO" id="GO:0045259">
    <property type="term" value="C:proton-transporting ATP synthase complex"/>
    <property type="evidence" value="ECO:0007669"/>
    <property type="project" value="UniProtKB-KW"/>
</dbReference>
<dbReference type="GO" id="GO:0005524">
    <property type="term" value="F:ATP binding"/>
    <property type="evidence" value="ECO:0007669"/>
    <property type="project" value="UniProtKB-UniRule"/>
</dbReference>
<dbReference type="GO" id="GO:0046933">
    <property type="term" value="F:proton-transporting ATP synthase activity, rotational mechanism"/>
    <property type="evidence" value="ECO:0007669"/>
    <property type="project" value="UniProtKB-UniRule"/>
</dbReference>
<dbReference type="GO" id="GO:0042777">
    <property type="term" value="P:proton motive force-driven plasma membrane ATP synthesis"/>
    <property type="evidence" value="ECO:0007669"/>
    <property type="project" value="UniProtKB-UniRule"/>
</dbReference>
<dbReference type="CDD" id="cd12151">
    <property type="entry name" value="F1-ATPase_gamma"/>
    <property type="match status" value="1"/>
</dbReference>
<dbReference type="FunFam" id="1.10.287.80:FF:000005">
    <property type="entry name" value="ATP synthase gamma chain"/>
    <property type="match status" value="2"/>
</dbReference>
<dbReference type="FunFam" id="3.40.1380.10:FF:000001">
    <property type="entry name" value="ATP synthase gamma chain"/>
    <property type="match status" value="1"/>
</dbReference>
<dbReference type="Gene3D" id="3.40.1380.10">
    <property type="match status" value="1"/>
</dbReference>
<dbReference type="Gene3D" id="1.10.287.80">
    <property type="entry name" value="ATP synthase, gamma subunit, helix hairpin domain"/>
    <property type="match status" value="1"/>
</dbReference>
<dbReference type="HAMAP" id="MF_00815">
    <property type="entry name" value="ATP_synth_gamma_bact"/>
    <property type="match status" value="1"/>
</dbReference>
<dbReference type="InterPro" id="IPR035968">
    <property type="entry name" value="ATP_synth_F1_ATPase_gsu"/>
</dbReference>
<dbReference type="InterPro" id="IPR000131">
    <property type="entry name" value="ATP_synth_F1_gsu"/>
</dbReference>
<dbReference type="InterPro" id="IPR023632">
    <property type="entry name" value="ATP_synth_F1_gsu_CS"/>
</dbReference>
<dbReference type="NCBIfam" id="TIGR01146">
    <property type="entry name" value="ATPsyn_F1gamma"/>
    <property type="match status" value="1"/>
</dbReference>
<dbReference type="NCBIfam" id="NF004144">
    <property type="entry name" value="PRK05621.1-1"/>
    <property type="match status" value="1"/>
</dbReference>
<dbReference type="PANTHER" id="PTHR11693">
    <property type="entry name" value="ATP SYNTHASE GAMMA CHAIN"/>
    <property type="match status" value="1"/>
</dbReference>
<dbReference type="PANTHER" id="PTHR11693:SF22">
    <property type="entry name" value="ATP SYNTHASE SUBUNIT GAMMA, MITOCHONDRIAL"/>
    <property type="match status" value="1"/>
</dbReference>
<dbReference type="Pfam" id="PF00231">
    <property type="entry name" value="ATP-synt"/>
    <property type="match status" value="1"/>
</dbReference>
<dbReference type="PRINTS" id="PR00126">
    <property type="entry name" value="ATPASEGAMMA"/>
</dbReference>
<dbReference type="SUPFAM" id="SSF52943">
    <property type="entry name" value="ATP synthase (F1-ATPase), gamma subunit"/>
    <property type="match status" value="1"/>
</dbReference>
<dbReference type="PROSITE" id="PS00153">
    <property type="entry name" value="ATPASE_GAMMA"/>
    <property type="match status" value="1"/>
</dbReference>
<evidence type="ECO:0000255" key="1">
    <source>
        <dbReference type="HAMAP-Rule" id="MF_00815"/>
    </source>
</evidence>
<organism>
    <name type="scientific">Salmonella paratyphi C (strain RKS4594)</name>
    <dbReference type="NCBI Taxonomy" id="476213"/>
    <lineage>
        <taxon>Bacteria</taxon>
        <taxon>Pseudomonadati</taxon>
        <taxon>Pseudomonadota</taxon>
        <taxon>Gammaproteobacteria</taxon>
        <taxon>Enterobacterales</taxon>
        <taxon>Enterobacteriaceae</taxon>
        <taxon>Salmonella</taxon>
    </lineage>
</organism>
<name>ATPG_SALPC</name>
<proteinExistence type="inferred from homology"/>
<keyword id="KW-0066">ATP synthesis</keyword>
<keyword id="KW-0997">Cell inner membrane</keyword>
<keyword id="KW-1003">Cell membrane</keyword>
<keyword id="KW-0139">CF(1)</keyword>
<keyword id="KW-0375">Hydrogen ion transport</keyword>
<keyword id="KW-0406">Ion transport</keyword>
<keyword id="KW-0472">Membrane</keyword>
<keyword id="KW-0813">Transport</keyword>